<keyword id="KW-0119">Carbohydrate metabolism</keyword>
<keyword id="KW-0320">Glycogen biosynthesis</keyword>
<keyword id="KW-0321">Glycogen metabolism</keyword>
<keyword id="KW-0328">Glycosyltransferase</keyword>
<keyword id="KW-1185">Reference proteome</keyword>
<keyword id="KW-0808">Transferase</keyword>
<reference key="1">
    <citation type="journal article" date="2001" name="Proc. Natl. Acad. Sci. U.S.A.">
        <title>Genome sequence of an industrial microorganism Streptomyces avermitilis: deducing the ability of producing secondary metabolites.</title>
        <authorList>
            <person name="Omura S."/>
            <person name="Ikeda H."/>
            <person name="Ishikawa J."/>
            <person name="Hanamoto A."/>
            <person name="Takahashi C."/>
            <person name="Shinose M."/>
            <person name="Takahashi Y."/>
            <person name="Horikawa H."/>
            <person name="Nakazawa H."/>
            <person name="Osonoe T."/>
            <person name="Kikuchi H."/>
            <person name="Shiba T."/>
            <person name="Sakaki Y."/>
            <person name="Hattori M."/>
        </authorList>
    </citation>
    <scope>NUCLEOTIDE SEQUENCE [LARGE SCALE GENOMIC DNA]</scope>
    <source>
        <strain>ATCC 31267 / DSM 46492 / JCM 5070 / NBRC 14893 / NCIMB 12804 / NRRL 8165 / MA-4680</strain>
    </source>
</reference>
<reference key="2">
    <citation type="journal article" date="2003" name="Nat. Biotechnol.">
        <title>Complete genome sequence and comparative analysis of the industrial microorganism Streptomyces avermitilis.</title>
        <authorList>
            <person name="Ikeda H."/>
            <person name="Ishikawa J."/>
            <person name="Hanamoto A."/>
            <person name="Shinose M."/>
            <person name="Kikuchi H."/>
            <person name="Shiba T."/>
            <person name="Sakaki Y."/>
            <person name="Hattori M."/>
            <person name="Omura S."/>
        </authorList>
    </citation>
    <scope>NUCLEOTIDE SEQUENCE [LARGE SCALE GENOMIC DNA]</scope>
    <source>
        <strain>ATCC 31267 / DSM 46492 / JCM 5070 / NBRC 14893 / NCIMB 12804 / NRRL 8165 / MA-4680</strain>
    </source>
</reference>
<dbReference type="EC" id="2.4.1.18" evidence="1"/>
<dbReference type="EMBL" id="BA000030">
    <property type="protein sequence ID" value="BAC75110.1"/>
    <property type="molecule type" value="Genomic_DNA"/>
</dbReference>
<dbReference type="SMR" id="Q825Q8"/>
<dbReference type="CAZy" id="GH13">
    <property type="family name" value="Glycoside Hydrolase Family 13"/>
</dbReference>
<dbReference type="KEGG" id="sma:SAVERM_7399"/>
<dbReference type="eggNOG" id="COG0296">
    <property type="taxonomic scope" value="Bacteria"/>
</dbReference>
<dbReference type="HOGENOM" id="CLU_004245_3_2_11"/>
<dbReference type="UniPathway" id="UPA00164"/>
<dbReference type="Proteomes" id="UP000000428">
    <property type="component" value="Chromosome"/>
</dbReference>
<dbReference type="GO" id="GO:0005829">
    <property type="term" value="C:cytosol"/>
    <property type="evidence" value="ECO:0007669"/>
    <property type="project" value="TreeGrafter"/>
</dbReference>
<dbReference type="GO" id="GO:0003844">
    <property type="term" value="F:1,4-alpha-glucan branching enzyme activity"/>
    <property type="evidence" value="ECO:0007669"/>
    <property type="project" value="UniProtKB-UniRule"/>
</dbReference>
<dbReference type="GO" id="GO:0043169">
    <property type="term" value="F:cation binding"/>
    <property type="evidence" value="ECO:0007669"/>
    <property type="project" value="InterPro"/>
</dbReference>
<dbReference type="GO" id="GO:0004553">
    <property type="term" value="F:hydrolase activity, hydrolyzing O-glycosyl compounds"/>
    <property type="evidence" value="ECO:0007669"/>
    <property type="project" value="InterPro"/>
</dbReference>
<dbReference type="GO" id="GO:0005978">
    <property type="term" value="P:glycogen biosynthetic process"/>
    <property type="evidence" value="ECO:0007669"/>
    <property type="project" value="UniProtKB-UniRule"/>
</dbReference>
<dbReference type="CDD" id="cd11322">
    <property type="entry name" value="AmyAc_Glg_BE"/>
    <property type="match status" value="1"/>
</dbReference>
<dbReference type="CDD" id="cd02855">
    <property type="entry name" value="E_set_GBE_prok_N"/>
    <property type="match status" value="1"/>
</dbReference>
<dbReference type="FunFam" id="2.60.40.1180:FF:000002">
    <property type="entry name" value="1,4-alpha-glucan branching enzyme GlgB"/>
    <property type="match status" value="1"/>
</dbReference>
<dbReference type="FunFam" id="3.20.20.80:FF:000003">
    <property type="entry name" value="1,4-alpha-glucan branching enzyme GlgB"/>
    <property type="match status" value="1"/>
</dbReference>
<dbReference type="Gene3D" id="3.20.20.80">
    <property type="entry name" value="Glycosidases"/>
    <property type="match status" value="1"/>
</dbReference>
<dbReference type="Gene3D" id="2.60.40.1180">
    <property type="entry name" value="Golgi alpha-mannosidase II"/>
    <property type="match status" value="1"/>
</dbReference>
<dbReference type="Gene3D" id="2.60.40.10">
    <property type="entry name" value="Immunoglobulins"/>
    <property type="match status" value="1"/>
</dbReference>
<dbReference type="HAMAP" id="MF_00685">
    <property type="entry name" value="GlgB"/>
    <property type="match status" value="1"/>
</dbReference>
<dbReference type="InterPro" id="IPR006048">
    <property type="entry name" value="A-amylase/branching_C"/>
</dbReference>
<dbReference type="InterPro" id="IPR037439">
    <property type="entry name" value="Branching_enzy"/>
</dbReference>
<dbReference type="InterPro" id="IPR006407">
    <property type="entry name" value="GlgB"/>
</dbReference>
<dbReference type="InterPro" id="IPR044143">
    <property type="entry name" value="GlgB_N_E_set_prok"/>
</dbReference>
<dbReference type="InterPro" id="IPR006047">
    <property type="entry name" value="Glyco_hydro_13_cat_dom"/>
</dbReference>
<dbReference type="InterPro" id="IPR004193">
    <property type="entry name" value="Glyco_hydro_13_N"/>
</dbReference>
<dbReference type="InterPro" id="IPR013780">
    <property type="entry name" value="Glyco_hydro_b"/>
</dbReference>
<dbReference type="InterPro" id="IPR017853">
    <property type="entry name" value="Glycoside_hydrolase_SF"/>
</dbReference>
<dbReference type="InterPro" id="IPR013783">
    <property type="entry name" value="Ig-like_fold"/>
</dbReference>
<dbReference type="NCBIfam" id="TIGR01515">
    <property type="entry name" value="branching_enzym"/>
    <property type="match status" value="1"/>
</dbReference>
<dbReference type="NCBIfam" id="NF003811">
    <property type="entry name" value="PRK05402.1"/>
    <property type="match status" value="1"/>
</dbReference>
<dbReference type="NCBIfam" id="NF008967">
    <property type="entry name" value="PRK12313.1"/>
    <property type="match status" value="1"/>
</dbReference>
<dbReference type="PANTHER" id="PTHR43651">
    <property type="entry name" value="1,4-ALPHA-GLUCAN-BRANCHING ENZYME"/>
    <property type="match status" value="1"/>
</dbReference>
<dbReference type="PANTHER" id="PTHR43651:SF3">
    <property type="entry name" value="1,4-ALPHA-GLUCAN-BRANCHING ENZYME"/>
    <property type="match status" value="1"/>
</dbReference>
<dbReference type="Pfam" id="PF00128">
    <property type="entry name" value="Alpha-amylase"/>
    <property type="match status" value="2"/>
</dbReference>
<dbReference type="Pfam" id="PF02806">
    <property type="entry name" value="Alpha-amylase_C"/>
    <property type="match status" value="1"/>
</dbReference>
<dbReference type="Pfam" id="PF02922">
    <property type="entry name" value="CBM_48"/>
    <property type="match status" value="1"/>
</dbReference>
<dbReference type="PIRSF" id="PIRSF000463">
    <property type="entry name" value="GlgB"/>
    <property type="match status" value="1"/>
</dbReference>
<dbReference type="SMART" id="SM00642">
    <property type="entry name" value="Aamy"/>
    <property type="match status" value="1"/>
</dbReference>
<dbReference type="SUPFAM" id="SSF51445">
    <property type="entry name" value="(Trans)glycosidases"/>
    <property type="match status" value="1"/>
</dbReference>
<dbReference type="SUPFAM" id="SSF51011">
    <property type="entry name" value="Glycosyl hydrolase domain"/>
    <property type="match status" value="1"/>
</dbReference>
<name>GLGB2_STRAW</name>
<evidence type="ECO:0000255" key="1">
    <source>
        <dbReference type="HAMAP-Rule" id="MF_00685"/>
    </source>
</evidence>
<proteinExistence type="inferred from homology"/>
<sequence>MMTHAGVLGTRFTVWAPNARGVRVCGNFCRWDGAAFPMRSLGSSGVWELFVPGIGEGELYKFEITRPDGTHTVRADPMARRAEVPPATASIVTESSYAWADGAWMAARGERPVHESPFSVYEVHLPSWRPGLTYRQLAEQLPAYVADLGFTHVELLPVAEHPFGGSWGYQVTGFYAPTARLGTPDDFKYLVDALHRAGVGVLMDWVPAHFPRDDWALAEFDGRPLYEPEDPQRAAHPDWGTLEFDYGRKEVRNFLVANAVYWCEEFHIDGLRVDAVASMLYLDYSREEGQWSPNEFGGRDNPDAVAFLQEMNATLYRRVPGVITIAEESTAWDGVTRATHDNGLGFGLKWNMGWMHDSLGYVQHEPVHRKYHHHEMTFSMVYAYSENYVLPISHDEVVHGKQALVSKMPGDWWQRRANHRAYLGFMWAHPGKQLLFMGQEFAQGAEWSPEHGPEWWLLDDEYHSAGDHRGMRDLVRDLNTLYRAEPALWERDTDPSGFAWVVGDAAEDNVFAFLRHAADGTPLLAVSNFSPVVRHDYRLGVPDDIPAWQEALNTDAARYGGSDLICPDPVKPESGEIRLTLPPLATVWLRPA</sequence>
<feature type="chain" id="PRO_0000188748" description="1,4-alpha-glucan branching enzyme GlgB 2">
    <location>
        <begin position="1"/>
        <end position="592"/>
    </location>
</feature>
<feature type="active site" description="Nucleophile" evidence="1">
    <location>
        <position position="274"/>
    </location>
</feature>
<feature type="active site" description="Proton donor" evidence="1">
    <location>
        <position position="327"/>
    </location>
</feature>
<accession>Q825Q8</accession>
<comment type="function">
    <text evidence="1">Catalyzes the formation of the alpha-1,6-glucosidic linkages in glycogen by scission of a 1,4-alpha-linked oligosaccharide from growing alpha-1,4-glucan chains and the subsequent attachment of the oligosaccharide to the alpha-1,6 position.</text>
</comment>
<comment type="catalytic activity">
    <reaction evidence="1">
        <text>Transfers a segment of a (1-&gt;4)-alpha-D-glucan chain to a primary hydroxy group in a similar glucan chain.</text>
        <dbReference type="EC" id="2.4.1.18"/>
    </reaction>
</comment>
<comment type="pathway">
    <text evidence="1">Glycan biosynthesis; glycogen biosynthesis.</text>
</comment>
<comment type="subunit">
    <text evidence="1">Monomer.</text>
</comment>
<comment type="similarity">
    <text evidence="1">Belongs to the glycosyl hydrolase 13 family. GlgB subfamily.</text>
</comment>
<gene>
    <name evidence="1" type="primary">glgB2</name>
    <name type="ordered locus">SAV_7399</name>
</gene>
<organism>
    <name type="scientific">Streptomyces avermitilis (strain ATCC 31267 / DSM 46492 / JCM 5070 / NBRC 14893 / NCIMB 12804 / NRRL 8165 / MA-4680)</name>
    <dbReference type="NCBI Taxonomy" id="227882"/>
    <lineage>
        <taxon>Bacteria</taxon>
        <taxon>Bacillati</taxon>
        <taxon>Actinomycetota</taxon>
        <taxon>Actinomycetes</taxon>
        <taxon>Kitasatosporales</taxon>
        <taxon>Streptomycetaceae</taxon>
        <taxon>Streptomyces</taxon>
    </lineage>
</organism>
<protein>
    <recommendedName>
        <fullName evidence="1">1,4-alpha-glucan branching enzyme GlgB 2</fullName>
        <ecNumber evidence="1">2.4.1.18</ecNumber>
    </recommendedName>
    <alternativeName>
        <fullName evidence="1">1,4-alpha-D-glucan:1,4-alpha-D-glucan 6-glucosyl-transferase 2</fullName>
    </alternativeName>
    <alternativeName>
        <fullName evidence="1">Alpha-(1-&gt;4)-glucan branching enzyme 2</fullName>
    </alternativeName>
    <alternativeName>
        <fullName evidence="1">Glycogen branching enzyme 2</fullName>
        <shortName evidence="1">BE 2</shortName>
    </alternativeName>
</protein>